<accession>Q7A6D3</accession>
<dbReference type="EMBL" id="BA000018">
    <property type="protein sequence ID" value="BAB42115.1"/>
    <property type="molecule type" value="Genomic_DNA"/>
</dbReference>
<dbReference type="PIR" id="H89869">
    <property type="entry name" value="H89869"/>
</dbReference>
<dbReference type="RefSeq" id="WP_001154223.1">
    <property type="nucleotide sequence ID" value="NC_002745.2"/>
</dbReference>
<dbReference type="SMR" id="Q7A6D3"/>
<dbReference type="EnsemblBacteria" id="BAB42115">
    <property type="protein sequence ID" value="BAB42115"/>
    <property type="gene ID" value="BAB42115"/>
</dbReference>
<dbReference type="KEGG" id="sau:SA0874"/>
<dbReference type="HOGENOM" id="CLU_054518_0_0_9"/>
<dbReference type="UniPathway" id="UPA00556"/>
<dbReference type="GO" id="GO:0005886">
    <property type="term" value="C:plasma membrane"/>
    <property type="evidence" value="ECO:0007669"/>
    <property type="project" value="UniProtKB-SubCell"/>
</dbReference>
<dbReference type="GO" id="GO:0015297">
    <property type="term" value="F:antiporter activity"/>
    <property type="evidence" value="ECO:0007669"/>
    <property type="project" value="UniProtKB-KW"/>
</dbReference>
<dbReference type="GO" id="GO:0006869">
    <property type="term" value="P:lipid transport"/>
    <property type="evidence" value="ECO:0007669"/>
    <property type="project" value="UniProtKB-KW"/>
</dbReference>
<dbReference type="GO" id="GO:0070395">
    <property type="term" value="P:lipoteichoic acid biosynthetic process"/>
    <property type="evidence" value="ECO:0007669"/>
    <property type="project" value="UniProtKB-UniPathway"/>
</dbReference>
<dbReference type="CDD" id="cd17325">
    <property type="entry name" value="MFS_MdtG_SLC18_like"/>
    <property type="match status" value="1"/>
</dbReference>
<dbReference type="Gene3D" id="1.20.1250.20">
    <property type="entry name" value="MFS general substrate transporter like domains"/>
    <property type="match status" value="2"/>
</dbReference>
<dbReference type="InterPro" id="IPR050495">
    <property type="entry name" value="ATG22/LtaA_families"/>
</dbReference>
<dbReference type="InterPro" id="IPR011701">
    <property type="entry name" value="MFS"/>
</dbReference>
<dbReference type="InterPro" id="IPR020846">
    <property type="entry name" value="MFS_dom"/>
</dbReference>
<dbReference type="InterPro" id="IPR036259">
    <property type="entry name" value="MFS_trans_sf"/>
</dbReference>
<dbReference type="NCBIfam" id="NF047396">
    <property type="entry name" value="MFS_flip_LtaA"/>
    <property type="match status" value="1"/>
</dbReference>
<dbReference type="PANTHER" id="PTHR23519">
    <property type="entry name" value="AUTOPHAGY-RELATED PROTEIN 22"/>
    <property type="match status" value="1"/>
</dbReference>
<dbReference type="PANTHER" id="PTHR23519:SF1">
    <property type="entry name" value="AUTOPHAGY-RELATED PROTEIN 22"/>
    <property type="match status" value="1"/>
</dbReference>
<dbReference type="Pfam" id="PF07690">
    <property type="entry name" value="MFS_1"/>
    <property type="match status" value="1"/>
</dbReference>
<dbReference type="SUPFAM" id="SSF103473">
    <property type="entry name" value="MFS general substrate transporter"/>
    <property type="match status" value="1"/>
</dbReference>
<dbReference type="PROSITE" id="PS50850">
    <property type="entry name" value="MFS"/>
    <property type="match status" value="1"/>
</dbReference>
<sequence>MQDSSLNNYANHKNFILMLIILFLMEFARGMYILSYINFLPTVTSIAVAITSLAFSIHFIADASTNFVIGFLLKKFGTKIVLTTGFILAFTSLFLVIWFPASPFVIIFSAMMLGIAVSPIWVIMLSSVEEDKRGKQMGYVYFSWLLGLLVGMVFMNLLIKVHPTRFAFMMSLVVLIAWILYYFVDVKLTNYNTRPVKAQLRQIVDVTKRHLLLFPGILLQGAAIAALVPILPTYATKVINVSTIEYTVAIIIGGIGCAVSMLFLSKLIDNRSRNFMYGVILSGFILYMILIFTLSMIVNIHIVWIIALAIGLMYGILLPAWNTFMARFIKSDEQEETWGVFNSIQGFGSMIGPLFGGLITQFTNDLNNTFYFSALIFLVLAVFYGSYFIANREKAK</sequence>
<organism>
    <name type="scientific">Staphylococcus aureus (strain N315)</name>
    <dbReference type="NCBI Taxonomy" id="158879"/>
    <lineage>
        <taxon>Bacteria</taxon>
        <taxon>Bacillati</taxon>
        <taxon>Bacillota</taxon>
        <taxon>Bacilli</taxon>
        <taxon>Bacillales</taxon>
        <taxon>Staphylococcaceae</taxon>
        <taxon>Staphylococcus</taxon>
    </lineage>
</organism>
<proteinExistence type="inferred from homology"/>
<comment type="function">
    <text evidence="1">Proton-coupled antiporter flippase that catalyzes the translocation, from the inner to the outer leaflet of the cell membrane, of the lipid-linked disaccharide (anchor-LLD) that anchors lipoteichoic acids (LTA) to the cell membrane.</text>
</comment>
<comment type="pathway">
    <text evidence="1">Cell wall biogenesis; lipoteichoic acid biosynthesis.</text>
</comment>
<comment type="subcellular location">
    <subcellularLocation>
        <location evidence="1">Cell membrane</location>
        <topology evidence="1">Multi-pass membrane protein</topology>
    </subcellularLocation>
</comment>
<comment type="similarity">
    <text evidence="3">Belongs to the major facilitator superfamily. LtaA family.</text>
</comment>
<protein>
    <recommendedName>
        <fullName evidence="1">Proton-coupled antiporter flippase LtaA</fullName>
    </recommendedName>
    <alternativeName>
        <fullName evidence="1">Lipoteichoic acid protein A</fullName>
    </alternativeName>
</protein>
<gene>
    <name type="primary">ltaA</name>
    <name type="ordered locus">SA0874</name>
</gene>
<name>LTAA_STAAN</name>
<evidence type="ECO:0000250" key="1">
    <source>
        <dbReference type="UniProtKB" id="Q2FZP8"/>
    </source>
</evidence>
<evidence type="ECO:0000255" key="2"/>
<evidence type="ECO:0000305" key="3"/>
<feature type="chain" id="PRO_0000287158" description="Proton-coupled antiporter flippase LtaA">
    <location>
        <begin position="1"/>
        <end position="396"/>
    </location>
</feature>
<feature type="transmembrane region" description="Helical" evidence="2">
    <location>
        <begin position="15"/>
        <end position="34"/>
    </location>
</feature>
<feature type="transmembrane region" description="Helical" evidence="2">
    <location>
        <begin position="46"/>
        <end position="73"/>
    </location>
</feature>
<feature type="transmembrane region" description="Helical" evidence="2">
    <location>
        <begin position="80"/>
        <end position="99"/>
    </location>
</feature>
<feature type="transmembrane region" description="Helical" evidence="2">
    <location>
        <begin position="105"/>
        <end position="126"/>
    </location>
</feature>
<feature type="transmembrane region" description="Helical" evidence="2">
    <location>
        <begin position="138"/>
        <end position="159"/>
    </location>
</feature>
<feature type="transmembrane region" description="Helical" evidence="2">
    <location>
        <begin position="165"/>
        <end position="184"/>
    </location>
</feature>
<feature type="transmembrane region" description="Helical" evidence="2">
    <location>
        <begin position="211"/>
        <end position="231"/>
    </location>
</feature>
<feature type="transmembrane region" description="Helical" evidence="2">
    <location>
        <begin position="243"/>
        <end position="264"/>
    </location>
</feature>
<feature type="transmembrane region" description="Helical" evidence="2">
    <location>
        <begin position="276"/>
        <end position="298"/>
    </location>
</feature>
<feature type="transmembrane region" description="Helical" evidence="2">
    <location>
        <begin position="304"/>
        <end position="326"/>
    </location>
</feature>
<feature type="transmembrane region" description="Helical" evidence="2">
    <location>
        <begin position="338"/>
        <end position="358"/>
    </location>
</feature>
<feature type="transmembrane region" description="Helical" evidence="2">
    <location>
        <begin position="370"/>
        <end position="390"/>
    </location>
</feature>
<reference key="1">
    <citation type="journal article" date="2001" name="Lancet">
        <title>Whole genome sequencing of meticillin-resistant Staphylococcus aureus.</title>
        <authorList>
            <person name="Kuroda M."/>
            <person name="Ohta T."/>
            <person name="Uchiyama I."/>
            <person name="Baba T."/>
            <person name="Yuzawa H."/>
            <person name="Kobayashi I."/>
            <person name="Cui L."/>
            <person name="Oguchi A."/>
            <person name="Aoki K."/>
            <person name="Nagai Y."/>
            <person name="Lian J.-Q."/>
            <person name="Ito T."/>
            <person name="Kanamori M."/>
            <person name="Matsumaru H."/>
            <person name="Maruyama A."/>
            <person name="Murakami H."/>
            <person name="Hosoyama A."/>
            <person name="Mizutani-Ui Y."/>
            <person name="Takahashi N.K."/>
            <person name="Sawano T."/>
            <person name="Inoue R."/>
            <person name="Kaito C."/>
            <person name="Sekimizu K."/>
            <person name="Hirakawa H."/>
            <person name="Kuhara S."/>
            <person name="Goto S."/>
            <person name="Yabuzaki J."/>
            <person name="Kanehisa M."/>
            <person name="Yamashita A."/>
            <person name="Oshima K."/>
            <person name="Furuya K."/>
            <person name="Yoshino C."/>
            <person name="Shiba T."/>
            <person name="Hattori M."/>
            <person name="Ogasawara N."/>
            <person name="Hayashi H."/>
            <person name="Hiramatsu K."/>
        </authorList>
    </citation>
    <scope>NUCLEOTIDE SEQUENCE [LARGE SCALE GENOMIC DNA]</scope>
    <source>
        <strain>N315</strain>
    </source>
</reference>
<keyword id="KW-0050">Antiport</keyword>
<keyword id="KW-1003">Cell membrane</keyword>
<keyword id="KW-0445">Lipid transport</keyword>
<keyword id="KW-0472">Membrane</keyword>
<keyword id="KW-0812">Transmembrane</keyword>
<keyword id="KW-1133">Transmembrane helix</keyword>
<keyword id="KW-0813">Transport</keyword>
<keyword id="KW-0843">Virulence</keyword>